<gene>
    <name evidence="1" type="primary">dtd</name>
    <name type="ordered locus">TERTU_3204</name>
</gene>
<evidence type="ECO:0000255" key="1">
    <source>
        <dbReference type="HAMAP-Rule" id="MF_00518"/>
    </source>
</evidence>
<comment type="function">
    <text evidence="1">An aminoacyl-tRNA editing enzyme that deacylates mischarged D-aminoacyl-tRNAs. Also deacylates mischarged glycyl-tRNA(Ala), protecting cells against glycine mischarging by AlaRS. Acts via tRNA-based rather than protein-based catalysis; rejects L-amino acids rather than detecting D-amino acids in the active site. By recycling D-aminoacyl-tRNA to D-amino acids and free tRNA molecules, this enzyme counteracts the toxicity associated with the formation of D-aminoacyl-tRNA entities in vivo and helps enforce protein L-homochirality.</text>
</comment>
<comment type="catalytic activity">
    <reaction evidence="1">
        <text>glycyl-tRNA(Ala) + H2O = tRNA(Ala) + glycine + H(+)</text>
        <dbReference type="Rhea" id="RHEA:53744"/>
        <dbReference type="Rhea" id="RHEA-COMP:9657"/>
        <dbReference type="Rhea" id="RHEA-COMP:13640"/>
        <dbReference type="ChEBI" id="CHEBI:15377"/>
        <dbReference type="ChEBI" id="CHEBI:15378"/>
        <dbReference type="ChEBI" id="CHEBI:57305"/>
        <dbReference type="ChEBI" id="CHEBI:78442"/>
        <dbReference type="ChEBI" id="CHEBI:78522"/>
        <dbReference type="EC" id="3.1.1.96"/>
    </reaction>
</comment>
<comment type="catalytic activity">
    <reaction evidence="1">
        <text>a D-aminoacyl-tRNA + H2O = a tRNA + a D-alpha-amino acid + H(+)</text>
        <dbReference type="Rhea" id="RHEA:13953"/>
        <dbReference type="Rhea" id="RHEA-COMP:10123"/>
        <dbReference type="Rhea" id="RHEA-COMP:10124"/>
        <dbReference type="ChEBI" id="CHEBI:15377"/>
        <dbReference type="ChEBI" id="CHEBI:15378"/>
        <dbReference type="ChEBI" id="CHEBI:59871"/>
        <dbReference type="ChEBI" id="CHEBI:78442"/>
        <dbReference type="ChEBI" id="CHEBI:79333"/>
        <dbReference type="EC" id="3.1.1.96"/>
    </reaction>
</comment>
<comment type="subunit">
    <text evidence="1">Homodimer.</text>
</comment>
<comment type="subcellular location">
    <subcellularLocation>
        <location evidence="1">Cytoplasm</location>
    </subcellularLocation>
</comment>
<comment type="domain">
    <text evidence="1">A Gly-cisPro motif from one monomer fits into the active site of the other monomer to allow specific chiral rejection of L-amino acids.</text>
</comment>
<comment type="similarity">
    <text evidence="1">Belongs to the DTD family.</text>
</comment>
<feature type="chain" id="PRO_1000211738" description="D-aminoacyl-tRNA deacylase">
    <location>
        <begin position="1"/>
        <end position="145"/>
    </location>
</feature>
<feature type="short sequence motif" description="Gly-cisPro motif, important for rejection of L-amino acids" evidence="1">
    <location>
        <begin position="137"/>
        <end position="138"/>
    </location>
</feature>
<reference key="1">
    <citation type="journal article" date="2009" name="PLoS ONE">
        <title>The complete genome of Teredinibacter turnerae T7901: an intracellular endosymbiont of marine wood-boring bivalves (shipworms).</title>
        <authorList>
            <person name="Yang J.C."/>
            <person name="Madupu R."/>
            <person name="Durkin A.S."/>
            <person name="Ekborg N.A."/>
            <person name="Pedamallu C.S."/>
            <person name="Hostetler J.B."/>
            <person name="Radune D."/>
            <person name="Toms B.S."/>
            <person name="Henrissat B."/>
            <person name="Coutinho P.M."/>
            <person name="Schwarz S."/>
            <person name="Field L."/>
            <person name="Trindade-Silva A.E."/>
            <person name="Soares C.A.G."/>
            <person name="Elshahawi S."/>
            <person name="Hanora A."/>
            <person name="Schmidt E.W."/>
            <person name="Haygood M.G."/>
            <person name="Posfai J."/>
            <person name="Benner J."/>
            <person name="Madinger C."/>
            <person name="Nove J."/>
            <person name="Anton B."/>
            <person name="Chaudhary K."/>
            <person name="Foster J."/>
            <person name="Holman A."/>
            <person name="Kumar S."/>
            <person name="Lessard P.A."/>
            <person name="Luyten Y.A."/>
            <person name="Slatko B."/>
            <person name="Wood N."/>
            <person name="Wu B."/>
            <person name="Teplitski M."/>
            <person name="Mougous J.D."/>
            <person name="Ward N."/>
            <person name="Eisen J.A."/>
            <person name="Badger J.H."/>
            <person name="Distel D.L."/>
        </authorList>
    </citation>
    <scope>NUCLEOTIDE SEQUENCE [LARGE SCALE GENOMIC DNA]</scope>
    <source>
        <strain>ATCC 39867 / T7901</strain>
    </source>
</reference>
<proteinExistence type="inferred from homology"/>
<name>DTD_TERTT</name>
<keyword id="KW-0963">Cytoplasm</keyword>
<keyword id="KW-0378">Hydrolase</keyword>
<keyword id="KW-1185">Reference proteome</keyword>
<keyword id="KW-0694">RNA-binding</keyword>
<keyword id="KW-0820">tRNA-binding</keyword>
<organism>
    <name type="scientific">Teredinibacter turnerae (strain ATCC 39867 / T7901)</name>
    <dbReference type="NCBI Taxonomy" id="377629"/>
    <lineage>
        <taxon>Bacteria</taxon>
        <taxon>Pseudomonadati</taxon>
        <taxon>Pseudomonadota</taxon>
        <taxon>Gammaproteobacteria</taxon>
        <taxon>Cellvibrionales</taxon>
        <taxon>Cellvibrionaceae</taxon>
        <taxon>Teredinibacter</taxon>
    </lineage>
</organism>
<protein>
    <recommendedName>
        <fullName evidence="1">D-aminoacyl-tRNA deacylase</fullName>
        <shortName evidence="1">DTD</shortName>
        <ecNumber evidence="1">3.1.1.96</ecNumber>
    </recommendedName>
    <alternativeName>
        <fullName evidence="1">Gly-tRNA(Ala) deacylase</fullName>
    </alternativeName>
</protein>
<sequence length="145" mass="15735">MKVLIQRVTQAAVDVDSITIGQIDAGILALVGVEKQDNRETLGRMAQKLLKYRIFPDSEGKMNLSLTDTGGGLLVVSQFTLAADTRKGLRPSFSSSAPPDLARSLFDEFVAALRAQHPNVETGRFGADMKVRLINDGPVTFMLES</sequence>
<accession>C5BPU7</accession>
<dbReference type="EC" id="3.1.1.96" evidence="1"/>
<dbReference type="EMBL" id="CP001614">
    <property type="protein sequence ID" value="ACR13038.1"/>
    <property type="molecule type" value="Genomic_DNA"/>
</dbReference>
<dbReference type="RefSeq" id="WP_015819151.1">
    <property type="nucleotide sequence ID" value="NC_012997.1"/>
</dbReference>
<dbReference type="SMR" id="C5BPU7"/>
<dbReference type="STRING" id="377629.TERTU_3204"/>
<dbReference type="KEGG" id="ttu:TERTU_3204"/>
<dbReference type="eggNOG" id="COG1490">
    <property type="taxonomic scope" value="Bacteria"/>
</dbReference>
<dbReference type="HOGENOM" id="CLU_076901_1_0_6"/>
<dbReference type="OrthoDB" id="9801395at2"/>
<dbReference type="Proteomes" id="UP000009080">
    <property type="component" value="Chromosome"/>
</dbReference>
<dbReference type="GO" id="GO:0005737">
    <property type="term" value="C:cytoplasm"/>
    <property type="evidence" value="ECO:0007669"/>
    <property type="project" value="UniProtKB-SubCell"/>
</dbReference>
<dbReference type="GO" id="GO:0051500">
    <property type="term" value="F:D-tyrosyl-tRNA(Tyr) deacylase activity"/>
    <property type="evidence" value="ECO:0007669"/>
    <property type="project" value="TreeGrafter"/>
</dbReference>
<dbReference type="GO" id="GO:0106026">
    <property type="term" value="F:Gly-tRNA(Ala) deacylase activity"/>
    <property type="evidence" value="ECO:0007669"/>
    <property type="project" value="UniProtKB-UniRule"/>
</dbReference>
<dbReference type="GO" id="GO:0043908">
    <property type="term" value="F:Ser(Gly)-tRNA(Ala) hydrolase activity"/>
    <property type="evidence" value="ECO:0007669"/>
    <property type="project" value="UniProtKB-UniRule"/>
</dbReference>
<dbReference type="GO" id="GO:0000049">
    <property type="term" value="F:tRNA binding"/>
    <property type="evidence" value="ECO:0007669"/>
    <property type="project" value="UniProtKB-UniRule"/>
</dbReference>
<dbReference type="GO" id="GO:0019478">
    <property type="term" value="P:D-amino acid catabolic process"/>
    <property type="evidence" value="ECO:0007669"/>
    <property type="project" value="UniProtKB-UniRule"/>
</dbReference>
<dbReference type="CDD" id="cd00563">
    <property type="entry name" value="Dtyr_deacylase"/>
    <property type="match status" value="1"/>
</dbReference>
<dbReference type="FunFam" id="3.50.80.10:FF:000001">
    <property type="entry name" value="D-aminoacyl-tRNA deacylase"/>
    <property type="match status" value="1"/>
</dbReference>
<dbReference type="Gene3D" id="3.50.80.10">
    <property type="entry name" value="D-tyrosyl-tRNA(Tyr) deacylase"/>
    <property type="match status" value="1"/>
</dbReference>
<dbReference type="HAMAP" id="MF_00518">
    <property type="entry name" value="Deacylase_Dtd"/>
    <property type="match status" value="1"/>
</dbReference>
<dbReference type="InterPro" id="IPR003732">
    <property type="entry name" value="Daa-tRNA_deacyls_DTD"/>
</dbReference>
<dbReference type="InterPro" id="IPR023509">
    <property type="entry name" value="DTD-like_sf"/>
</dbReference>
<dbReference type="NCBIfam" id="TIGR00256">
    <property type="entry name" value="D-aminoacyl-tRNA deacylase"/>
    <property type="match status" value="1"/>
</dbReference>
<dbReference type="PANTHER" id="PTHR10472:SF5">
    <property type="entry name" value="D-AMINOACYL-TRNA DEACYLASE 1"/>
    <property type="match status" value="1"/>
</dbReference>
<dbReference type="PANTHER" id="PTHR10472">
    <property type="entry name" value="D-TYROSYL-TRNA TYR DEACYLASE"/>
    <property type="match status" value="1"/>
</dbReference>
<dbReference type="Pfam" id="PF02580">
    <property type="entry name" value="Tyr_Deacylase"/>
    <property type="match status" value="1"/>
</dbReference>
<dbReference type="SUPFAM" id="SSF69500">
    <property type="entry name" value="DTD-like"/>
    <property type="match status" value="1"/>
</dbReference>